<feature type="signal peptide" evidence="3">
    <location>
        <begin position="1"/>
        <end position="22"/>
    </location>
</feature>
<feature type="propeptide" id="PRO_0000401447" evidence="2">
    <location>
        <begin position="23"/>
        <end position="75"/>
    </location>
</feature>
<feature type="peptide" id="PRO_0000401448" description="GLV10p">
    <location>
        <begin position="76"/>
        <end position="88"/>
    </location>
</feature>
<feature type="region of interest" description="Disordered" evidence="4">
    <location>
        <begin position="44"/>
        <end position="88"/>
    </location>
</feature>
<feature type="modified residue" description="Sulfotyrosine" evidence="2">
    <location>
        <position position="77"/>
    </location>
</feature>
<feature type="modified residue" description="Hydroxyproline" evidence="1">
    <location>
        <position position="85"/>
    </location>
</feature>
<name>GLV10_ARATH</name>
<proteinExistence type="evidence at protein level"/>
<protein>
    <recommendedName>
        <fullName evidence="11">Protein GOLVEN 10</fullName>
    </recommendedName>
    <alternativeName>
        <fullName evidence="10">CLAVATA3/ESR (CLE)-related protein CLEL7</fullName>
        <shortName evidence="10">CLE-Like protein 7</shortName>
    </alternativeName>
    <alternativeName>
        <fullName evidence="9">Root meristem growth factor 5</fullName>
        <shortName evidence="9">AtRGF5</shortName>
    </alternativeName>
    <component>
        <recommendedName>
            <fullName evidence="11">GLV10p</fullName>
        </recommendedName>
    </component>
</protein>
<evidence type="ECO:0000250" key="1">
    <source>
        <dbReference type="UniProtKB" id="O49519"/>
    </source>
</evidence>
<evidence type="ECO:0000250" key="2">
    <source>
        <dbReference type="UniProtKB" id="Q3E880"/>
    </source>
</evidence>
<evidence type="ECO:0000255" key="3"/>
<evidence type="ECO:0000256" key="4">
    <source>
        <dbReference type="SAM" id="MobiDB-lite"/>
    </source>
</evidence>
<evidence type="ECO:0000269" key="5">
    <source>
    </source>
</evidence>
<evidence type="ECO:0000269" key="6">
    <source>
    </source>
</evidence>
<evidence type="ECO:0000269" key="7">
    <source>
    </source>
</evidence>
<evidence type="ECO:0000269" key="8">
    <source>
    </source>
</evidence>
<evidence type="ECO:0000303" key="9">
    <source>
    </source>
</evidence>
<evidence type="ECO:0000303" key="10">
    <source>
    </source>
</evidence>
<evidence type="ECO:0000303" key="11">
    <source>
    </source>
</evidence>
<evidence type="ECO:0000305" key="12"/>
<evidence type="ECO:0000305" key="13">
    <source>
    </source>
</evidence>
<evidence type="ECO:0000305" key="14">
    <source>
    </source>
</evidence>
<evidence type="ECO:0000312" key="15">
    <source>
        <dbReference type="Araport" id="AT5G51451"/>
    </source>
</evidence>
<evidence type="ECO:0000312" key="16">
    <source>
        <dbReference type="EMBL" id="AB025621"/>
    </source>
</evidence>
<accession>B3H5J1</accession>
<comment type="function">
    <molecule>GLV10p</molecule>
    <text evidence="5 6 7">Signaling peptide (root growth factor) that maintains the postembryonic root stem cell niche (PubMed:20798316). Regulates the pattern of root growth and lateral root development by modulating the length and the number of cortical cells in the root apical meristem (RAM), and the anticlinal asymmetric cell divisions in lateral root initiation cells (PubMed:22307643, PubMed:23370719).</text>
</comment>
<comment type="subunit">
    <molecule>GLV10p</molecule>
    <text evidence="8">Binds to LRR receptor-like serine/threonine-protein kinases RGI1, RGI2 and RGI3 to trigger their dimerization with SERK proteins and subsequent signaling.</text>
</comment>
<comment type="subcellular location">
    <molecule>GLV10p</molecule>
    <subcellularLocation>
        <location evidence="13">Secreted</location>
    </subcellularLocation>
</comment>
<comment type="subcellular location">
    <subcellularLocation>
        <location evidence="6">Endoplasmic reticulum</location>
    </subcellularLocation>
    <text evidence="6">The precursor is detected in the endoplasmic reticulum probably during its processing.</text>
</comment>
<comment type="tissue specificity">
    <text evidence="7">Expressed in roots, shoots, leaves and flowers.</text>
</comment>
<comment type="developmental stage">
    <text evidence="7">In roots, expressed only in the quiescent center (QC) and the columella stem cells (CC) initials (PubMed:23370719). Slightly observed in additional underlying CCs and in the vascular initials above the QC (PubMed:23370719). Induced early during lateral root formation (PubMed:23370719).</text>
</comment>
<comment type="miscellaneous">
    <text evidence="14">'Golven' means irregular waves in Dutch.</text>
</comment>
<comment type="similarity">
    <text evidence="12">Belongs to the RGF family.</text>
</comment>
<gene>
    <name evidence="11" type="primary">GLV10</name>
    <name evidence="10" type="synonym">CLEL7</name>
    <name evidence="9" type="synonym">RGF5</name>
    <name evidence="15" type="ordered locus">At5g51451</name>
    <name evidence="16" type="ORF">MFG13</name>
</gene>
<keyword id="KW-0002">3D-structure</keyword>
<keyword id="KW-0221">Differentiation</keyword>
<keyword id="KW-0256">Endoplasmic reticulum</keyword>
<keyword id="KW-0339">Growth factor</keyword>
<keyword id="KW-0379">Hydroxylation</keyword>
<keyword id="KW-1185">Reference proteome</keyword>
<keyword id="KW-0964">Secreted</keyword>
<keyword id="KW-0732">Signal</keyword>
<keyword id="KW-0765">Sulfation</keyword>
<dbReference type="EMBL" id="AB025621">
    <property type="status" value="NOT_ANNOTATED_CDS"/>
    <property type="molecule type" value="Genomic_DNA"/>
</dbReference>
<dbReference type="EMBL" id="CP002688">
    <property type="protein sequence ID" value="AED96084.1"/>
    <property type="molecule type" value="Genomic_DNA"/>
</dbReference>
<dbReference type="EMBL" id="CB254977">
    <property type="status" value="NOT_ANNOTATED_CDS"/>
    <property type="molecule type" value="mRNA"/>
</dbReference>
<dbReference type="RefSeq" id="NP_001119414.1">
    <property type="nucleotide sequence ID" value="NM_001125942.2"/>
</dbReference>
<dbReference type="PDB" id="5HZ3">
    <property type="method" value="X-ray"/>
    <property type="resolution" value="2.86 A"/>
    <property type="chains" value="A=76-88"/>
</dbReference>
<dbReference type="PDBsum" id="5HZ3"/>
<dbReference type="SMR" id="B3H5J1"/>
<dbReference type="STRING" id="3702.B3H5J1"/>
<dbReference type="PaxDb" id="3702-AT5G51451.1"/>
<dbReference type="EnsemblPlants" id="AT5G51451.1">
    <property type="protein sequence ID" value="AT5G51451.1"/>
    <property type="gene ID" value="AT5G51451"/>
</dbReference>
<dbReference type="GeneID" id="6241076"/>
<dbReference type="Gramene" id="AT5G51451.1">
    <property type="protein sequence ID" value="AT5G51451.1"/>
    <property type="gene ID" value="AT5G51451"/>
</dbReference>
<dbReference type="KEGG" id="ath:AT5G51451"/>
<dbReference type="Araport" id="AT5G51451"/>
<dbReference type="TAIR" id="AT5G51451">
    <property type="gene designation" value="RGF5"/>
</dbReference>
<dbReference type="eggNOG" id="ENOG502R1RU">
    <property type="taxonomic scope" value="Eukaryota"/>
</dbReference>
<dbReference type="HOGENOM" id="CLU_2486407_0_0_1"/>
<dbReference type="InParanoid" id="B3H5J1"/>
<dbReference type="OMA" id="AVKHHHR"/>
<dbReference type="PRO" id="PR:B3H5J1"/>
<dbReference type="Proteomes" id="UP000006548">
    <property type="component" value="Chromosome 5"/>
</dbReference>
<dbReference type="ExpressionAtlas" id="B3H5J1">
    <property type="expression patterns" value="baseline and differential"/>
</dbReference>
<dbReference type="GO" id="GO:0005783">
    <property type="term" value="C:endoplasmic reticulum"/>
    <property type="evidence" value="ECO:0007669"/>
    <property type="project" value="UniProtKB-SubCell"/>
</dbReference>
<dbReference type="GO" id="GO:0005615">
    <property type="term" value="C:extracellular space"/>
    <property type="evidence" value="ECO:0000250"/>
    <property type="project" value="UniProtKB"/>
</dbReference>
<dbReference type="GO" id="GO:0008083">
    <property type="term" value="F:growth factor activity"/>
    <property type="evidence" value="ECO:0000314"/>
    <property type="project" value="UniProtKB"/>
</dbReference>
<dbReference type="GO" id="GO:0030154">
    <property type="term" value="P:cell differentiation"/>
    <property type="evidence" value="ECO:0000314"/>
    <property type="project" value="UniProtKB"/>
</dbReference>
<dbReference type="GO" id="GO:0048527">
    <property type="term" value="P:lateral root development"/>
    <property type="evidence" value="ECO:0000315"/>
    <property type="project" value="TAIR"/>
</dbReference>
<dbReference type="GO" id="GO:0008284">
    <property type="term" value="P:positive regulation of cell population proliferation"/>
    <property type="evidence" value="ECO:0000314"/>
    <property type="project" value="UniProtKB"/>
</dbReference>
<dbReference type="GO" id="GO:0009786">
    <property type="term" value="P:regulation of asymmetric cell division"/>
    <property type="evidence" value="ECO:0000314"/>
    <property type="project" value="UniProtKB"/>
</dbReference>
<dbReference type="GO" id="GO:2000023">
    <property type="term" value="P:regulation of lateral root development"/>
    <property type="evidence" value="ECO:0000314"/>
    <property type="project" value="UniProtKB"/>
</dbReference>
<dbReference type="GO" id="GO:0010082">
    <property type="term" value="P:regulation of root meristem growth"/>
    <property type="evidence" value="ECO:0000314"/>
    <property type="project" value="UniProtKB"/>
</dbReference>
<dbReference type="GO" id="GO:2000067">
    <property type="term" value="P:regulation of root morphogenesis"/>
    <property type="evidence" value="ECO:0000314"/>
    <property type="project" value="UniProtKB"/>
</dbReference>
<dbReference type="GO" id="GO:0022622">
    <property type="term" value="P:root system development"/>
    <property type="evidence" value="ECO:0000315"/>
    <property type="project" value="TAIR"/>
</dbReference>
<sequence>MSSIHVASMILLLFLFLHHSDSRHLDNVHITASRFSLVKDQNVVSSSTSKEPVKVSRFVPGPLKHHHRRPPLLFADYPKPSTRPPRHN</sequence>
<organism>
    <name type="scientific">Arabidopsis thaliana</name>
    <name type="common">Mouse-ear cress</name>
    <dbReference type="NCBI Taxonomy" id="3702"/>
    <lineage>
        <taxon>Eukaryota</taxon>
        <taxon>Viridiplantae</taxon>
        <taxon>Streptophyta</taxon>
        <taxon>Embryophyta</taxon>
        <taxon>Tracheophyta</taxon>
        <taxon>Spermatophyta</taxon>
        <taxon>Magnoliopsida</taxon>
        <taxon>eudicotyledons</taxon>
        <taxon>Gunneridae</taxon>
        <taxon>Pentapetalae</taxon>
        <taxon>rosids</taxon>
        <taxon>malvids</taxon>
        <taxon>Brassicales</taxon>
        <taxon>Brassicaceae</taxon>
        <taxon>Camelineae</taxon>
        <taxon>Arabidopsis</taxon>
    </lineage>
</organism>
<reference key="1">
    <citation type="submission" date="1999-04" db="EMBL/GenBank/DDBJ databases">
        <title>Structural analysis of Arabidopsis thaliana chromosome 5. XI.</title>
        <authorList>
            <person name="Kaneko T."/>
            <person name="Katoh T."/>
            <person name="Asamizu E."/>
            <person name="Sato S."/>
            <person name="Nakamura Y."/>
            <person name="Kotani H."/>
            <person name="Tabata S."/>
        </authorList>
    </citation>
    <scope>NUCLEOTIDE SEQUENCE [LARGE SCALE GENOMIC DNA]</scope>
    <source>
        <strain>cv. Columbia</strain>
    </source>
</reference>
<reference key="2">
    <citation type="journal article" date="2017" name="Plant J.">
        <title>Araport11: a complete reannotation of the Arabidopsis thaliana reference genome.</title>
        <authorList>
            <person name="Cheng C.Y."/>
            <person name="Krishnakumar V."/>
            <person name="Chan A.P."/>
            <person name="Thibaud-Nissen F."/>
            <person name="Schobel S."/>
            <person name="Town C.D."/>
        </authorList>
    </citation>
    <scope>GENOME REANNOTATION</scope>
    <source>
        <strain>cv. Columbia</strain>
    </source>
</reference>
<reference key="3">
    <citation type="submission" date="2005-01" db="EMBL/GenBank/DDBJ databases">
        <title>Arabidopsis thaliana cDNA library enriched in transcription factors.</title>
        <authorList>
            <person name="Jakoby M."/>
            <person name="Stracke R."/>
            <person name="Soerensen T.R."/>
            <person name="Weisshaar B."/>
        </authorList>
    </citation>
    <scope>NUCLEOTIDE SEQUENCE [LARGE SCALE MRNA]</scope>
</reference>
<reference key="4">
    <citation type="journal article" date="2010" name="Science">
        <title>Secreted peptide signals required for maintenance of root stem cell niche in Arabidopsis.</title>
        <authorList>
            <person name="Matsuzaki Y."/>
            <person name="Ogawa-Ohnishi M."/>
            <person name="Mori A."/>
            <person name="Matsubayashi Y."/>
        </authorList>
    </citation>
    <scope>FUNCTION</scope>
    <scope>GENE FAMILY</scope>
    <scope>NOMENCLATURE</scope>
</reference>
<reference key="5">
    <citation type="journal article" date="2012" name="Proc. Natl. Acad. Sci. U.S.A.">
        <title>CLE-like (CLEL) peptides control the pattern of root growth and lateral root development in Arabidopsis.</title>
        <authorList>
            <person name="Meng L."/>
            <person name="Buchanan B.B."/>
            <person name="Feldman L.J."/>
            <person name="Luan S."/>
        </authorList>
    </citation>
    <scope>FUNCTION</scope>
    <scope>SUBCELLULAR LOCATION</scope>
    <scope>NOMENCLATURE</scope>
    <scope>GENE FAMILY</scope>
    <source>
        <strain>cv. Columbia</strain>
    </source>
</reference>
<reference key="6">
    <citation type="journal article" date="2013" name="Plant Physiol.">
        <title>Transcriptional and functional classification of the GOLVEN/ROOT GROWTH FACTOR/CLE-like signaling peptides reveals their role in lateral root and hair formation.</title>
        <authorList>
            <person name="Fernandez A."/>
            <person name="Drozdzecki A."/>
            <person name="Hoogewijs K."/>
            <person name="Nguyen A."/>
            <person name="Beeckman T."/>
            <person name="Madder A."/>
            <person name="Hilson P."/>
        </authorList>
    </citation>
    <scope>FUNCTION</scope>
    <scope>TISSUE SPECIFICITY</scope>
    <scope>DEVELOPMENTAL STAGE</scope>
    <source>
        <strain>cv. Columbia</strain>
    </source>
</reference>
<reference key="7">
    <citation type="journal article" date="2016" name="Proc. Natl. Acad. Sci. U.S.A.">
        <title>Identification of three LRR-RKs involved in perception of root meristem growth factor in Arabidopsis.</title>
        <authorList>
            <person name="Shinohara H."/>
            <person name="Mori A."/>
            <person name="Yasue N."/>
            <person name="Sumida K."/>
            <person name="Matsubayashi Y."/>
        </authorList>
    </citation>
    <scope>INTERACTION WITH RGI1; RGI2 AND RGI3</scope>
    <source>
        <strain>cv. Columbia</strain>
    </source>
</reference>
<reference key="8">
    <citation type="submission" date="2016-02" db="PDB data bank">
        <title>Plant Receptor.</title>
        <authorList>
            <person name="Song W."/>
            <person name="Han Z."/>
            <person name="Chai J."/>
        </authorList>
    </citation>
    <scope>X-RAY CRYSTALLOGRAPHY (2.86 ANGSTROMS) OF 76-88</scope>
</reference>